<reference key="1">
    <citation type="journal article" date="2000" name="Proc. Natl. Acad. Sci. U.S.A.">
        <title>Genome sequence of Halobacterium species NRC-1.</title>
        <authorList>
            <person name="Ng W.V."/>
            <person name="Kennedy S.P."/>
            <person name="Mahairas G.G."/>
            <person name="Berquist B."/>
            <person name="Pan M."/>
            <person name="Shukla H.D."/>
            <person name="Lasky S.R."/>
            <person name="Baliga N.S."/>
            <person name="Thorsson V."/>
            <person name="Sbrogna J."/>
            <person name="Swartzell S."/>
            <person name="Weir D."/>
            <person name="Hall J."/>
            <person name="Dahl T.A."/>
            <person name="Welti R."/>
            <person name="Goo Y.A."/>
            <person name="Leithauser B."/>
            <person name="Keller K."/>
            <person name="Cruz R."/>
            <person name="Danson M.J."/>
            <person name="Hough D.W."/>
            <person name="Maddocks D.G."/>
            <person name="Jablonski P.E."/>
            <person name="Krebs M.P."/>
            <person name="Angevine C.M."/>
            <person name="Dale H."/>
            <person name="Isenbarger T.A."/>
            <person name="Peck R.F."/>
            <person name="Pohlschroder M."/>
            <person name="Spudich J.L."/>
            <person name="Jung K.-H."/>
            <person name="Alam M."/>
            <person name="Freitas T."/>
            <person name="Hou S."/>
            <person name="Daniels C.J."/>
            <person name="Dennis P.P."/>
            <person name="Omer A.D."/>
            <person name="Ebhardt H."/>
            <person name="Lowe T.M."/>
            <person name="Liang P."/>
            <person name="Riley M."/>
            <person name="Hood L."/>
            <person name="DasSarma S."/>
        </authorList>
    </citation>
    <scope>NUCLEOTIDE SEQUENCE [LARGE SCALE GENOMIC DNA]</scope>
    <source>
        <strain>ATCC 700922 / JCM 11081 / NRC-1</strain>
    </source>
</reference>
<gene>
    <name evidence="1" type="primary">msrA</name>
    <name type="ordered locus">VNG_1180G</name>
</gene>
<dbReference type="EC" id="1.8.4.11" evidence="1"/>
<dbReference type="EMBL" id="AE004437">
    <property type="protein sequence ID" value="AAG19555.1"/>
    <property type="molecule type" value="Genomic_DNA"/>
</dbReference>
<dbReference type="PIR" id="G84273">
    <property type="entry name" value="G84273"/>
</dbReference>
<dbReference type="RefSeq" id="WP_010902851.1">
    <property type="nucleotide sequence ID" value="NC_002607.1"/>
</dbReference>
<dbReference type="SMR" id="Q9HQG0"/>
<dbReference type="STRING" id="64091.VNG_1180G"/>
<dbReference type="PaxDb" id="64091-VNG_1180G"/>
<dbReference type="GeneID" id="89349533"/>
<dbReference type="KEGG" id="hal:VNG_1180G"/>
<dbReference type="PATRIC" id="fig|64091.14.peg.903"/>
<dbReference type="HOGENOM" id="CLU_031040_10_0_2"/>
<dbReference type="InParanoid" id="Q9HQG0"/>
<dbReference type="OrthoDB" id="7150at2157"/>
<dbReference type="PhylomeDB" id="Q9HQG0"/>
<dbReference type="Proteomes" id="UP000000554">
    <property type="component" value="Chromosome"/>
</dbReference>
<dbReference type="GO" id="GO:0033744">
    <property type="term" value="F:L-methionine:thioredoxin-disulfide S-oxidoreductase activity"/>
    <property type="evidence" value="ECO:0007669"/>
    <property type="project" value="RHEA"/>
</dbReference>
<dbReference type="GO" id="GO:0008113">
    <property type="term" value="F:peptide-methionine (S)-S-oxide reductase activity"/>
    <property type="evidence" value="ECO:0007669"/>
    <property type="project" value="UniProtKB-UniRule"/>
</dbReference>
<dbReference type="GO" id="GO:0036211">
    <property type="term" value="P:protein modification process"/>
    <property type="evidence" value="ECO:0007669"/>
    <property type="project" value="UniProtKB-UniRule"/>
</dbReference>
<dbReference type="Gene3D" id="3.30.1060.10">
    <property type="entry name" value="Peptide methionine sulphoxide reductase MsrA"/>
    <property type="match status" value="1"/>
</dbReference>
<dbReference type="HAMAP" id="MF_01401">
    <property type="entry name" value="MsrA"/>
    <property type="match status" value="1"/>
</dbReference>
<dbReference type="InterPro" id="IPR002569">
    <property type="entry name" value="Met_Sox_Rdtase_MsrA_dom"/>
</dbReference>
<dbReference type="InterPro" id="IPR036509">
    <property type="entry name" value="Met_Sox_Rdtase_MsrA_sf"/>
</dbReference>
<dbReference type="NCBIfam" id="TIGR00401">
    <property type="entry name" value="msrA"/>
    <property type="match status" value="1"/>
</dbReference>
<dbReference type="PANTHER" id="PTHR43774">
    <property type="entry name" value="PEPTIDE METHIONINE SULFOXIDE REDUCTASE"/>
    <property type="match status" value="1"/>
</dbReference>
<dbReference type="PANTHER" id="PTHR43774:SF1">
    <property type="entry name" value="PEPTIDE METHIONINE SULFOXIDE REDUCTASE MSRA 2"/>
    <property type="match status" value="1"/>
</dbReference>
<dbReference type="Pfam" id="PF01625">
    <property type="entry name" value="PMSR"/>
    <property type="match status" value="1"/>
</dbReference>
<dbReference type="SUPFAM" id="SSF55068">
    <property type="entry name" value="Peptide methionine sulfoxide reductase"/>
    <property type="match status" value="1"/>
</dbReference>
<feature type="chain" id="PRO_0000138617" description="Peptide methionine sulfoxide reductase MsrA">
    <location>
        <begin position="1"/>
        <end position="177"/>
    </location>
</feature>
<feature type="active site" evidence="1">
    <location>
        <position position="12"/>
    </location>
</feature>
<proteinExistence type="inferred from homology"/>
<comment type="function">
    <text evidence="1">Has an important function as a repair enzyme for proteins that have been inactivated by oxidation. Catalyzes the reversible oxidation-reduction of methionine sulfoxide in proteins to methionine.</text>
</comment>
<comment type="catalytic activity">
    <reaction evidence="1">
        <text>L-methionyl-[protein] + [thioredoxin]-disulfide + H2O = L-methionyl-(S)-S-oxide-[protein] + [thioredoxin]-dithiol</text>
        <dbReference type="Rhea" id="RHEA:14217"/>
        <dbReference type="Rhea" id="RHEA-COMP:10698"/>
        <dbReference type="Rhea" id="RHEA-COMP:10700"/>
        <dbReference type="Rhea" id="RHEA-COMP:12313"/>
        <dbReference type="Rhea" id="RHEA-COMP:12315"/>
        <dbReference type="ChEBI" id="CHEBI:15377"/>
        <dbReference type="ChEBI" id="CHEBI:16044"/>
        <dbReference type="ChEBI" id="CHEBI:29950"/>
        <dbReference type="ChEBI" id="CHEBI:44120"/>
        <dbReference type="ChEBI" id="CHEBI:50058"/>
        <dbReference type="EC" id="1.8.4.11"/>
    </reaction>
</comment>
<comment type="catalytic activity">
    <reaction evidence="1">
        <text>[thioredoxin]-disulfide + L-methionine + H2O = L-methionine (S)-S-oxide + [thioredoxin]-dithiol</text>
        <dbReference type="Rhea" id="RHEA:19993"/>
        <dbReference type="Rhea" id="RHEA-COMP:10698"/>
        <dbReference type="Rhea" id="RHEA-COMP:10700"/>
        <dbReference type="ChEBI" id="CHEBI:15377"/>
        <dbReference type="ChEBI" id="CHEBI:29950"/>
        <dbReference type="ChEBI" id="CHEBI:50058"/>
        <dbReference type="ChEBI" id="CHEBI:57844"/>
        <dbReference type="ChEBI" id="CHEBI:58772"/>
        <dbReference type="EC" id="1.8.4.11"/>
    </reaction>
</comment>
<comment type="similarity">
    <text evidence="1">Belongs to the MsrA Met sulfoxide reductase family.</text>
</comment>
<protein>
    <recommendedName>
        <fullName evidence="1">Peptide methionine sulfoxide reductase MsrA</fullName>
        <shortName evidence="1">Protein-methionine-S-oxide reductase</shortName>
        <ecNumber evidence="1">1.8.4.11</ecNumber>
    </recommendedName>
    <alternativeName>
        <fullName evidence="1">Peptide-methionine (S)-S-oxide reductase</fullName>
        <shortName evidence="1">Peptide Met(O) reductase</shortName>
    </alternativeName>
</protein>
<name>MSRA_HALSA</name>
<sequence length="177" mass="19202">MGTETATLGGGCFWCTEAAMEELAGVTDVTSGYAGGDTADPSYRDVCSGTTGHAEVVQVEYDTAELAYEDVLEVFFTVHDPTTVDREGPDVGSQYRSIVLPHDDQQHERATAFVDELAAADAFDGSIVTEIEPLETFYPAAEKHQNYFEKNPDAAYCTVNVAPKVSKVREQFGARTE</sequence>
<evidence type="ECO:0000255" key="1">
    <source>
        <dbReference type="HAMAP-Rule" id="MF_01401"/>
    </source>
</evidence>
<accession>Q9HQG0</accession>
<keyword id="KW-0560">Oxidoreductase</keyword>
<keyword id="KW-1185">Reference proteome</keyword>
<organism>
    <name type="scientific">Halobacterium salinarum (strain ATCC 700922 / JCM 11081 / NRC-1)</name>
    <name type="common">Halobacterium halobium</name>
    <dbReference type="NCBI Taxonomy" id="64091"/>
    <lineage>
        <taxon>Archaea</taxon>
        <taxon>Methanobacteriati</taxon>
        <taxon>Methanobacteriota</taxon>
        <taxon>Stenosarchaea group</taxon>
        <taxon>Halobacteria</taxon>
        <taxon>Halobacteriales</taxon>
        <taxon>Halobacteriaceae</taxon>
        <taxon>Halobacterium</taxon>
        <taxon>Halobacterium salinarum NRC-34001</taxon>
    </lineage>
</organism>